<evidence type="ECO:0000250" key="1">
    <source>
        <dbReference type="UniProtKB" id="A0A8I3PI99"/>
    </source>
</evidence>
<evidence type="ECO:0000250" key="2">
    <source>
        <dbReference type="UniProtKB" id="C5HGF3"/>
    </source>
</evidence>
<evidence type="ECO:0000250" key="3">
    <source>
        <dbReference type="UniProtKB" id="Q921L3"/>
    </source>
</evidence>
<evidence type="ECO:0000250" key="4">
    <source>
        <dbReference type="UniProtKB" id="Q9UM00"/>
    </source>
</evidence>
<evidence type="ECO:0000255" key="5"/>
<evidence type="ECO:0000305" key="6"/>
<proteinExistence type="evidence at transcript level"/>
<protein>
    <recommendedName>
        <fullName evidence="4">Calcium load-activated calcium channel</fullName>
        <shortName evidence="4">CLAC channel</shortName>
    </recommendedName>
    <alternativeName>
        <fullName evidence="6">GEL complex subunit TMCO1</fullName>
    </alternativeName>
    <alternativeName>
        <fullName evidence="4">Transmembrane and coiled-coil domain-containing protein 1</fullName>
    </alternativeName>
</protein>
<gene>
    <name evidence="4" type="primary">TMCO1</name>
</gene>
<sequence>MSTMFADTLLIVFISVCTALLAEGITWVLVYRTDKYKRLKAEVEKQSKKLEKKKETITESAGRQQKKKIERQEEKLKNNNRDLSMVRMKSMFAIGFCFTALMGMFNSIFDGRVVAKLPFTPLSYIQGLSHRNLLGDDTTDCSFIFLYILCTMSIRQNIQKILGLAPSRAATKQAGGFLGPPPPSGKFS</sequence>
<comment type="function">
    <text evidence="3 4">Endoplasmic reticulum (ER) calcium-selective channel preventing intracellular Ca2(+) stores from overfilling and maintaining calcium homeostasis in the ER. In response to endoplasmic reticulum (ER) Ca2(+) overloading, assembles into a homotetramer, forming a functional calcium-selective channel facilitating Ca2(+) release (By similarity). Mediates ER Ca2(+) homeostasis in osteoblasts and plays a key role in bone formation, via the CaMKII-HDAC4-RUNX2 signaling axis (By similarity). Component of the multi-pass translocon (MPT) complex that mediates insertion of multi-pass membrane proteins into the lipid bilayer of membranes (By similarity). The MPT complex takes over after the SEC61 complex: following membrane insertion of the first few transmembrane segments of proteins by the SEC61 complex, the MPT complex occludes the lateral gate of the SEC61 complex to promote insertion of subsequent transmembrane regions (By similarity). Within the MPT complex, the GEL subcomplex may mediate insertion of transmembrane regions into the membrane (By similarity).</text>
</comment>
<comment type="catalytic activity">
    <reaction evidence="4">
        <text>Ca(2+)(in) = Ca(2+)(out)</text>
        <dbReference type="Rhea" id="RHEA:29671"/>
        <dbReference type="ChEBI" id="CHEBI:29108"/>
    </reaction>
</comment>
<comment type="subunit">
    <text evidence="4">Homodimer and homotetramer. Homodimer under resting conditions; forms homotetramers following ER calcium overload. Component of the GET- and EMC-like (GEL) complex, composed of RAB5IF/OPTI and TMCO1. The GEL complex is part of the multi-pass translocon (MPT) complex, composed of three subcomplexes, the GEL complex (composed of RAB5IF/OPTI and TMCO1), the BOS complex (composed of NCLN/Nicalin, NOMO1 and TMEM147) and the PAT complex (composed of WDR83OS/Asterix and CCDC47). The MPT complex associates with the SEC61 complex.</text>
</comment>
<comment type="subcellular location">
    <subcellularLocation>
        <location evidence="4">Endoplasmic reticulum membrane</location>
        <topology evidence="4">Multi-pass membrane protein</topology>
    </subcellularLocation>
    <subcellularLocation>
        <location evidence="4">Golgi apparatus membrane</location>
        <topology evidence="4">Multi-pass membrane protein</topology>
    </subcellularLocation>
    <subcellularLocation>
        <location evidence="2">Mitochondrion membrane</location>
        <topology evidence="4">Multi-pass membrane protein</topology>
    </subcellularLocation>
    <text evidence="4">The first transmembrane region is required for localization to the endoplasmic reticulum.</text>
</comment>
<comment type="similarity">
    <text evidence="6">Belongs to the TMCO1 family.</text>
</comment>
<feature type="chain" id="PRO_0000244075" description="Calcium load-activated calcium channel">
    <location>
        <begin position="1"/>
        <end position="188"/>
    </location>
</feature>
<feature type="topological domain" description="Lumenal" evidence="6">
    <location>
        <begin position="1"/>
        <end position="4"/>
    </location>
</feature>
<feature type="transmembrane region" description="Helical" evidence="1">
    <location>
        <begin position="5"/>
        <end position="32"/>
    </location>
</feature>
<feature type="topological domain" description="Cytoplasmic" evidence="6">
    <location>
        <begin position="33"/>
        <end position="86"/>
    </location>
</feature>
<feature type="transmembrane region" description="Helical" evidence="1">
    <location>
        <begin position="87"/>
        <end position="106"/>
    </location>
</feature>
<feature type="topological domain" description="Lumenal" evidence="6">
    <location>
        <begin position="107"/>
        <end position="120"/>
    </location>
</feature>
<feature type="intramembrane region" evidence="1">
    <location>
        <begin position="121"/>
        <end position="130"/>
    </location>
</feature>
<feature type="topological domain" description="Lumenal" evidence="6">
    <location>
        <begin position="131"/>
        <end position="140"/>
    </location>
</feature>
<feature type="transmembrane region" description="Helical" evidence="1">
    <location>
        <begin position="141"/>
        <end position="162"/>
    </location>
</feature>
<feature type="topological domain" description="Cytoplasmic" evidence="6">
    <location>
        <begin position="163"/>
        <end position="188"/>
    </location>
</feature>
<feature type="coiled-coil region" evidence="5">
    <location>
        <begin position="32"/>
        <end position="89"/>
    </location>
</feature>
<feature type="modified residue" description="Phosphoserine" evidence="4">
    <location>
        <position position="60"/>
    </location>
</feature>
<feature type="modified residue" description="Phosphoserine" evidence="4">
    <location>
        <position position="188"/>
    </location>
</feature>
<accession>Q3T0N3</accession>
<dbReference type="EMBL" id="BC102321">
    <property type="protein sequence ID" value="AAI02322.1"/>
    <property type="molecule type" value="mRNA"/>
</dbReference>
<dbReference type="RefSeq" id="NP_001029938.1">
    <property type="nucleotide sequence ID" value="NM_001034766.2"/>
</dbReference>
<dbReference type="SMR" id="Q3T0N3"/>
<dbReference type="FunCoup" id="Q3T0N3">
    <property type="interactions" value="2365"/>
</dbReference>
<dbReference type="STRING" id="9913.ENSBTAP00000013200"/>
<dbReference type="PaxDb" id="9913-ENSBTAP00000013200"/>
<dbReference type="PeptideAtlas" id="Q3T0N3"/>
<dbReference type="Ensembl" id="ENSBTAT00000013200.7">
    <property type="protein sequence ID" value="ENSBTAP00000013200.5"/>
    <property type="gene ID" value="ENSBTAG00000010009.7"/>
</dbReference>
<dbReference type="Ensembl" id="ENSBTAT00000092000.1">
    <property type="protein sequence ID" value="ENSBTAP00000076583.1"/>
    <property type="gene ID" value="ENSBTAG00000010009.7"/>
</dbReference>
<dbReference type="Ensembl" id="ENSBTAT00000099331.1">
    <property type="protein sequence ID" value="ENSBTAP00000087951.1"/>
    <property type="gene ID" value="ENSBTAG00000010009.7"/>
</dbReference>
<dbReference type="Ensembl" id="ENSBTAT00000110001.1">
    <property type="protein sequence ID" value="ENSBTAP00000095744.1"/>
    <property type="gene ID" value="ENSBTAG00000010009.7"/>
</dbReference>
<dbReference type="GeneID" id="614715"/>
<dbReference type="KEGG" id="bta:614715"/>
<dbReference type="CTD" id="54499"/>
<dbReference type="VEuPathDB" id="HostDB:ENSBTAG00000010009"/>
<dbReference type="VGNC" id="VGNC:35928">
    <property type="gene designation" value="TMCO1"/>
</dbReference>
<dbReference type="eggNOG" id="KOG3312">
    <property type="taxonomic scope" value="Eukaryota"/>
</dbReference>
<dbReference type="GeneTree" id="ENSGT00390000002659"/>
<dbReference type="HOGENOM" id="CLU_081121_0_0_1"/>
<dbReference type="InParanoid" id="Q3T0N3"/>
<dbReference type="OMA" id="GMFGDFK"/>
<dbReference type="OrthoDB" id="342726at2759"/>
<dbReference type="TreeFam" id="TF315045"/>
<dbReference type="Proteomes" id="UP000009136">
    <property type="component" value="Chromosome 3"/>
</dbReference>
<dbReference type="Bgee" id="ENSBTAG00000010009">
    <property type="expression patterns" value="Expressed in pons and 103 other cell types or tissues"/>
</dbReference>
<dbReference type="GO" id="GO:0005737">
    <property type="term" value="C:cytoplasm"/>
    <property type="evidence" value="ECO:0000318"/>
    <property type="project" value="GO_Central"/>
</dbReference>
<dbReference type="GO" id="GO:0005783">
    <property type="term" value="C:endoplasmic reticulum"/>
    <property type="evidence" value="ECO:0000318"/>
    <property type="project" value="GO_Central"/>
</dbReference>
<dbReference type="GO" id="GO:0005789">
    <property type="term" value="C:endoplasmic reticulum membrane"/>
    <property type="evidence" value="ECO:0000250"/>
    <property type="project" value="UniProtKB"/>
</dbReference>
<dbReference type="GO" id="GO:0000139">
    <property type="term" value="C:Golgi membrane"/>
    <property type="evidence" value="ECO:0007669"/>
    <property type="project" value="UniProtKB-SubCell"/>
</dbReference>
<dbReference type="GO" id="GO:0031966">
    <property type="term" value="C:mitochondrial membrane"/>
    <property type="evidence" value="ECO:0007669"/>
    <property type="project" value="UniProtKB-SubCell"/>
</dbReference>
<dbReference type="GO" id="GO:0160064">
    <property type="term" value="C:multi-pass translocon complex"/>
    <property type="evidence" value="ECO:0000250"/>
    <property type="project" value="UniProtKB"/>
</dbReference>
<dbReference type="GO" id="GO:0005262">
    <property type="term" value="F:calcium channel activity"/>
    <property type="evidence" value="ECO:0000250"/>
    <property type="project" value="UniProtKB"/>
</dbReference>
<dbReference type="GO" id="GO:0043022">
    <property type="term" value="F:ribosome binding"/>
    <property type="evidence" value="ECO:0000250"/>
    <property type="project" value="UniProtKB"/>
</dbReference>
<dbReference type="GO" id="GO:0070588">
    <property type="term" value="P:calcium ion transmembrane transport"/>
    <property type="evidence" value="ECO:0000250"/>
    <property type="project" value="UniProtKB"/>
</dbReference>
<dbReference type="GO" id="GO:0032469">
    <property type="term" value="P:endoplasmic reticulum calcium ion homeostasis"/>
    <property type="evidence" value="ECO:0000250"/>
    <property type="project" value="UniProtKB"/>
</dbReference>
<dbReference type="GO" id="GO:0006983">
    <property type="term" value="P:ER overload response"/>
    <property type="evidence" value="ECO:0000250"/>
    <property type="project" value="UniProtKB"/>
</dbReference>
<dbReference type="GO" id="GO:0160063">
    <property type="term" value="P:multi-pass transmembrane protein insertion into ER membrane"/>
    <property type="evidence" value="ECO:0000250"/>
    <property type="project" value="UniProtKB"/>
</dbReference>
<dbReference type="GO" id="GO:0001503">
    <property type="term" value="P:ossification"/>
    <property type="evidence" value="ECO:0000250"/>
    <property type="project" value="UniProtKB"/>
</dbReference>
<dbReference type="InterPro" id="IPR002809">
    <property type="entry name" value="EMC3/TMCO1"/>
</dbReference>
<dbReference type="InterPro" id="IPR008559">
    <property type="entry name" value="TMCO1"/>
</dbReference>
<dbReference type="PANTHER" id="PTHR20917:SF0">
    <property type="entry name" value="CALCIUM LOAD-ACTIVATED CALCIUM CHANNEL"/>
    <property type="match status" value="1"/>
</dbReference>
<dbReference type="PANTHER" id="PTHR20917">
    <property type="entry name" value="PNAS-RELATED"/>
    <property type="match status" value="1"/>
</dbReference>
<dbReference type="Pfam" id="PF01956">
    <property type="entry name" value="EMC3_TMCO1"/>
    <property type="match status" value="1"/>
</dbReference>
<dbReference type="PIRSF" id="PIRSF023322">
    <property type="entry name" value="DUF841_euk"/>
    <property type="match status" value="1"/>
</dbReference>
<dbReference type="SMART" id="SM01415">
    <property type="entry name" value="DUF106"/>
    <property type="match status" value="1"/>
</dbReference>
<reference key="1">
    <citation type="submission" date="2005-08" db="EMBL/GenBank/DDBJ databases">
        <authorList>
            <consortium name="NIH - Mammalian Gene Collection (MGC) project"/>
        </authorList>
    </citation>
    <scope>NUCLEOTIDE SEQUENCE [LARGE SCALE MRNA]</scope>
    <source>
        <strain>Crossbred X Angus</strain>
        <tissue>Ileum</tissue>
    </source>
</reference>
<keyword id="KW-0106">Calcium</keyword>
<keyword id="KW-0107">Calcium channel</keyword>
<keyword id="KW-0109">Calcium transport</keyword>
<keyword id="KW-0175">Coiled coil</keyword>
<keyword id="KW-0256">Endoplasmic reticulum</keyword>
<keyword id="KW-0333">Golgi apparatus</keyword>
<keyword id="KW-0407">Ion channel</keyword>
<keyword id="KW-0406">Ion transport</keyword>
<keyword id="KW-0472">Membrane</keyword>
<keyword id="KW-0496">Mitochondrion</keyword>
<keyword id="KW-0597">Phosphoprotein</keyword>
<keyword id="KW-1185">Reference proteome</keyword>
<keyword id="KW-0812">Transmembrane</keyword>
<keyword id="KW-1133">Transmembrane helix</keyword>
<keyword id="KW-0813">Transport</keyword>
<name>TMCO1_BOVIN</name>
<organism>
    <name type="scientific">Bos taurus</name>
    <name type="common">Bovine</name>
    <dbReference type="NCBI Taxonomy" id="9913"/>
    <lineage>
        <taxon>Eukaryota</taxon>
        <taxon>Metazoa</taxon>
        <taxon>Chordata</taxon>
        <taxon>Craniata</taxon>
        <taxon>Vertebrata</taxon>
        <taxon>Euteleostomi</taxon>
        <taxon>Mammalia</taxon>
        <taxon>Eutheria</taxon>
        <taxon>Laurasiatheria</taxon>
        <taxon>Artiodactyla</taxon>
        <taxon>Ruminantia</taxon>
        <taxon>Pecora</taxon>
        <taxon>Bovidae</taxon>
        <taxon>Bovinae</taxon>
        <taxon>Bos</taxon>
    </lineage>
</organism>